<organism>
    <name type="scientific">Methylocella silvestris (strain DSM 15510 / CIP 108128 / LMG 27833 / NCIMB 13906 / BL2)</name>
    <dbReference type="NCBI Taxonomy" id="395965"/>
    <lineage>
        <taxon>Bacteria</taxon>
        <taxon>Pseudomonadati</taxon>
        <taxon>Pseudomonadota</taxon>
        <taxon>Alphaproteobacteria</taxon>
        <taxon>Hyphomicrobiales</taxon>
        <taxon>Beijerinckiaceae</taxon>
        <taxon>Methylocella</taxon>
    </lineage>
</organism>
<protein>
    <recommendedName>
        <fullName evidence="1">Large ribosomal subunit protein bL25</fullName>
    </recommendedName>
    <alternativeName>
        <fullName evidence="3">50S ribosomal protein L25</fullName>
    </alternativeName>
    <alternativeName>
        <fullName evidence="1">General stress protein CTC</fullName>
    </alternativeName>
</protein>
<accession>B8EK41</accession>
<feature type="chain" id="PRO_1000166178" description="Large ribosomal subunit protein bL25">
    <location>
        <begin position="1"/>
        <end position="227"/>
    </location>
</feature>
<feature type="region of interest" description="Disordered" evidence="2">
    <location>
        <begin position="1"/>
        <end position="22"/>
    </location>
</feature>
<sequence>MAETKTLAAAARHGTGKGAARSVRREGRIPGVIYGGGDPAEPITLDYRELNKLIYAGHFLTTLFEIDVAGTKQRVIPRDYQLDPIKDLPLHVDFLRLKPGASLKVEVPVHFLNQETCPGVKKGGSVNIVRHSIELRVPADDIPEAITADLGELEINDSLHLTALALPQGCRPTQRERDFTIVTITPPLVVAETPVAAAAAAAAPKGKAGAKAAPAAAAAPAAPAKKK</sequence>
<evidence type="ECO:0000255" key="1">
    <source>
        <dbReference type="HAMAP-Rule" id="MF_01334"/>
    </source>
</evidence>
<evidence type="ECO:0000256" key="2">
    <source>
        <dbReference type="SAM" id="MobiDB-lite"/>
    </source>
</evidence>
<evidence type="ECO:0000305" key="3"/>
<keyword id="KW-1185">Reference proteome</keyword>
<keyword id="KW-0687">Ribonucleoprotein</keyword>
<keyword id="KW-0689">Ribosomal protein</keyword>
<keyword id="KW-0694">RNA-binding</keyword>
<keyword id="KW-0699">rRNA-binding</keyword>
<name>RL25_METSB</name>
<comment type="function">
    <text evidence="1">This is one of the proteins that binds to the 5S RNA in the ribosome where it forms part of the central protuberance.</text>
</comment>
<comment type="subunit">
    <text evidence="1">Part of the 50S ribosomal subunit; part of the 5S rRNA/L5/L18/L25 subcomplex. Contacts the 5S rRNA. Binds to the 5S rRNA independently of L5 and L18.</text>
</comment>
<comment type="similarity">
    <text evidence="1">Belongs to the bacterial ribosomal protein bL25 family. CTC subfamily.</text>
</comment>
<dbReference type="EMBL" id="CP001280">
    <property type="protein sequence ID" value="ACK50581.1"/>
    <property type="molecule type" value="Genomic_DNA"/>
</dbReference>
<dbReference type="RefSeq" id="WP_012590651.1">
    <property type="nucleotide sequence ID" value="NC_011666.1"/>
</dbReference>
<dbReference type="SMR" id="B8EK41"/>
<dbReference type="STRING" id="395965.Msil_1633"/>
<dbReference type="KEGG" id="msl:Msil_1633"/>
<dbReference type="eggNOG" id="COG1825">
    <property type="taxonomic scope" value="Bacteria"/>
</dbReference>
<dbReference type="HOGENOM" id="CLU_075939_0_0_5"/>
<dbReference type="OrthoDB" id="9806411at2"/>
<dbReference type="Proteomes" id="UP000002257">
    <property type="component" value="Chromosome"/>
</dbReference>
<dbReference type="GO" id="GO:0022625">
    <property type="term" value="C:cytosolic large ribosomal subunit"/>
    <property type="evidence" value="ECO:0007669"/>
    <property type="project" value="TreeGrafter"/>
</dbReference>
<dbReference type="GO" id="GO:0008097">
    <property type="term" value="F:5S rRNA binding"/>
    <property type="evidence" value="ECO:0007669"/>
    <property type="project" value="InterPro"/>
</dbReference>
<dbReference type="GO" id="GO:0003735">
    <property type="term" value="F:structural constituent of ribosome"/>
    <property type="evidence" value="ECO:0007669"/>
    <property type="project" value="InterPro"/>
</dbReference>
<dbReference type="GO" id="GO:0006412">
    <property type="term" value="P:translation"/>
    <property type="evidence" value="ECO:0007669"/>
    <property type="project" value="UniProtKB-UniRule"/>
</dbReference>
<dbReference type="CDD" id="cd00495">
    <property type="entry name" value="Ribosomal_L25_TL5_CTC"/>
    <property type="match status" value="1"/>
</dbReference>
<dbReference type="Gene3D" id="2.170.120.20">
    <property type="entry name" value="Ribosomal protein L25, beta domain"/>
    <property type="match status" value="1"/>
</dbReference>
<dbReference type="Gene3D" id="2.40.240.10">
    <property type="entry name" value="Ribosomal Protein L25, Chain P"/>
    <property type="match status" value="1"/>
</dbReference>
<dbReference type="HAMAP" id="MF_01334">
    <property type="entry name" value="Ribosomal_bL25_CTC"/>
    <property type="match status" value="1"/>
</dbReference>
<dbReference type="InterPro" id="IPR020056">
    <property type="entry name" value="Rbsml_bL25/Gln-tRNA_synth_N"/>
</dbReference>
<dbReference type="InterPro" id="IPR011035">
    <property type="entry name" value="Ribosomal_bL25/Gln-tRNA_synth"/>
</dbReference>
<dbReference type="InterPro" id="IPR020057">
    <property type="entry name" value="Ribosomal_bL25_b-dom"/>
</dbReference>
<dbReference type="InterPro" id="IPR037121">
    <property type="entry name" value="Ribosomal_bL25_C"/>
</dbReference>
<dbReference type="InterPro" id="IPR001021">
    <property type="entry name" value="Ribosomal_bL25_long"/>
</dbReference>
<dbReference type="InterPro" id="IPR029751">
    <property type="entry name" value="Ribosomal_L25_dom"/>
</dbReference>
<dbReference type="InterPro" id="IPR020930">
    <property type="entry name" value="Ribosomal_uL5_bac-type"/>
</dbReference>
<dbReference type="NCBIfam" id="TIGR00731">
    <property type="entry name" value="bL25_bact_ctc"/>
    <property type="match status" value="1"/>
</dbReference>
<dbReference type="NCBIfam" id="NF004128">
    <property type="entry name" value="PRK05618.1-2"/>
    <property type="match status" value="1"/>
</dbReference>
<dbReference type="PANTHER" id="PTHR33284">
    <property type="entry name" value="RIBOSOMAL PROTEIN L25/GLN-TRNA SYNTHETASE, ANTI-CODON-BINDING DOMAIN-CONTAINING PROTEIN"/>
    <property type="match status" value="1"/>
</dbReference>
<dbReference type="PANTHER" id="PTHR33284:SF1">
    <property type="entry name" value="RIBOSOMAL PROTEIN L25_GLN-TRNA SYNTHETASE, ANTI-CODON-BINDING DOMAIN-CONTAINING PROTEIN"/>
    <property type="match status" value="1"/>
</dbReference>
<dbReference type="Pfam" id="PF01386">
    <property type="entry name" value="Ribosomal_L25p"/>
    <property type="match status" value="1"/>
</dbReference>
<dbReference type="Pfam" id="PF14693">
    <property type="entry name" value="Ribosomal_TL5_C"/>
    <property type="match status" value="1"/>
</dbReference>
<dbReference type="SUPFAM" id="SSF50715">
    <property type="entry name" value="Ribosomal protein L25-like"/>
    <property type="match status" value="1"/>
</dbReference>
<proteinExistence type="inferred from homology"/>
<gene>
    <name evidence="1" type="primary">rplY</name>
    <name evidence="1" type="synonym">ctc</name>
    <name type="ordered locus">Msil_1633</name>
</gene>
<reference key="1">
    <citation type="journal article" date="2010" name="J. Bacteriol.">
        <title>Complete genome sequence of the aerobic facultative methanotroph Methylocella silvestris BL2.</title>
        <authorList>
            <person name="Chen Y."/>
            <person name="Crombie A."/>
            <person name="Rahman M.T."/>
            <person name="Dedysh S.N."/>
            <person name="Liesack W."/>
            <person name="Stott M.B."/>
            <person name="Alam M."/>
            <person name="Theisen A.R."/>
            <person name="Murrell J.C."/>
            <person name="Dunfield P.F."/>
        </authorList>
    </citation>
    <scope>NUCLEOTIDE SEQUENCE [LARGE SCALE GENOMIC DNA]</scope>
    <source>
        <strain>DSM 15510 / CIP 108128 / LMG 27833 / NCIMB 13906 / BL2</strain>
    </source>
</reference>